<organismHost>
    <name type="scientific">Homo sapiens</name>
    <name type="common">Human</name>
    <dbReference type="NCBI Taxonomy" id="9606"/>
</organismHost>
<proteinExistence type="evidence at protein level"/>
<accession>C0JJ97</accession>
<accession>A0A0K0K567</accession>
<accession>Q77IS5</accession>
<accession>Q9J4L6</accession>
<keyword id="KW-0002">3D-structure</keyword>
<keyword id="KW-0175">Coiled coil</keyword>
<keyword id="KW-0597">Phosphoprotein</keyword>
<keyword id="KW-0691">RNA editing</keyword>
<keyword id="KW-0693">Viral RNA replication</keyword>
<keyword id="KW-0946">Virion</keyword>
<reference key="1">
    <citation type="journal article" date="2000" name="J. Virol.">
        <title>Rescue of mumps virus from cDNA.</title>
        <authorList>
            <person name="Clarke D.K."/>
            <person name="Sidhu M.S."/>
            <person name="Johnson J.E."/>
            <person name="Udem S.A."/>
        </authorList>
    </citation>
    <scope>NUCLEOTIDE SEQUENCE [LARGE SCALE GENOMIC DNA]</scope>
    <source>
        <strain>Jeryl-Lynn</strain>
    </source>
</reference>
<reference key="2">
    <citation type="journal article" date="2002" name="Virology">
        <title>Sequence diversity of Jeryl Lynn strain of mumps virus: quantitative mutant analysis for vaccine quality control.</title>
        <authorList>
            <person name="Amexis G."/>
            <person name="Rubin S."/>
            <person name="Chizhikov V."/>
            <person name="Pelloquin F."/>
            <person name="Carbone K."/>
            <person name="Chumakov K."/>
        </authorList>
    </citation>
    <scope>NUCLEOTIDE SEQUENCE [LARGE SCALE GENOMIC DNA]</scope>
    <source>
        <strain>Jeryl-Lynn</strain>
    </source>
</reference>
<reference key="3">
    <citation type="journal article" date="2009" name="Vaccine">
        <title>Comparative analysis of the complete nucleotide sequences of measles, mumps, and rubella strain genomes contained in Priorix-Tetra and ProQuad live attenuated combined vaccines.</title>
        <authorList>
            <person name="Tillieux S.L."/>
            <person name="Halsey W.S."/>
            <person name="Sathe G.M."/>
            <person name="Vassilev V."/>
        </authorList>
    </citation>
    <scope>NUCLEOTIDE SEQUENCE [GENOMIC RNA]</scope>
    <source>
        <strain>Jeryl-Lynn</strain>
    </source>
</reference>
<reference key="4">
    <citation type="journal article" date="2010" name="Zhonghua Min Guo Wei Sheng Wu Ji Mian Yi Xue Za Zhi">
        <title>Sequencing of mumps virus S79 strain and comparative analysis.</title>
        <authorList>
            <person name="Zhang J."/>
            <person name="Li Q."/>
            <person name="Liang Y."/>
            <person name="Yu J."/>
            <person name="Chen S."/>
            <person name="Jin Y."/>
            <person name="Zhang X."/>
            <person name="Ma Z."/>
            <person name="Shen X."/>
        </authorList>
    </citation>
    <scope>NUCLEOTIDE SEQUENCE [GENOMIC RNA]</scope>
    <source>
        <strain>Isolate Jeryl Lynn-S79</strain>
    </source>
</reference>
<reference key="5">
    <citation type="journal article" date="2015" name="Vaccine">
        <title>In vitro and in vivo growth alter the population dynamic and properties of a Jeryl Lynn mumps vaccine.</title>
        <authorList>
            <person name="Connaughton S.M."/>
            <person name="Wheeler J.X."/>
            <person name="Vitkova E."/>
            <person name="Minor P."/>
            <person name="Schepelmann S."/>
        </authorList>
    </citation>
    <scope>NUCLEOTIDE SEQUENCE [GENOMIC RNA]</scope>
    <source>
        <strain>Isolate Jeryl Lynn-CK1</strain>
        <strain>Isolate Jeryl Lynn-CK2</strain>
        <strain>Isolate Jeryl Lynn-CK3</strain>
        <strain>Isolate Jeryl Lynn-CK4</strain>
        <strain>Isolate Jeryl Lynn-CK5</strain>
    </source>
</reference>
<reference key="6">
    <citation type="journal article" date="1990" name="J. Virol.">
        <title>RNA editing by G-nucleotide insertion in mumps virus P-gene mRNA transcripts.</title>
        <authorList>
            <person name="Paterson R.G."/>
            <person name="Lamb R.A."/>
        </authorList>
    </citation>
    <scope>RNA EDITING</scope>
    <source>
        <strain>RW</strain>
    </source>
</reference>
<reference key="7">
    <citation type="journal article" date="2016" name="Virol. J.">
        <title>Identification of mumps virus protein and lipid composition by mass spectrometry.</title>
        <authorList>
            <person name="Brgles M."/>
            <person name="Bonta M."/>
            <person name="Santak M."/>
            <person name="Jagusic M."/>
            <person name="Forcic D."/>
            <person name="Halassy B."/>
            <person name="Allmaier G."/>
            <person name="Marchetti-Deschmann M."/>
        </authorList>
    </citation>
    <scope>IDENTIFICATION BY MASS SPECTROMETRY</scope>
    <scope>SUBCELLULAR LOCATION</scope>
</reference>
<reference evidence="12" key="8">
    <citation type="journal article" date="2008" name="J. Mol. Biol.">
        <title>Structure of the nucleocapsid-binding domain from the mumps virus polymerase; an example of protein folding induced by crystallization.</title>
        <authorList>
            <person name="Kingston R.L."/>
            <person name="Gay L.S."/>
            <person name="Baase W.S."/>
            <person name="Matthews B.W."/>
        </authorList>
    </citation>
    <scope>X-RAY CRYSTALLOGRAPHY (2.10 ANGSTROMS) OF 343-391</scope>
    <scope>DOMAIN</scope>
    <scope>INTERACTION WITH THE NUCLEOCAPSID PROTEIN</scope>
</reference>
<reference evidence="13 14 15 16" key="9">
    <citation type="journal article" date="2024" name="Nat. Commun.">
        <title>Structures of the mumps virus polymerase complex via cryo-electron microscopy.</title>
        <authorList>
            <person name="Li T."/>
            <person name="Liu M."/>
            <person name="Gu Z."/>
            <person name="Su X."/>
            <person name="Liu Y."/>
            <person name="Lin J."/>
            <person name="Zhang Y."/>
            <person name="Shen Q.T."/>
        </authorList>
    </citation>
    <scope>STRUCTURE BY ELECTRON MICROSCOPY (2.93 ANGSTROMS)</scope>
    <scope>INTERACTION WITH THE L POLYMERASE</scope>
    <scope>SUBUNIT</scope>
    <source>
        <strain>Jeryl-Lynn</strain>
    </source>
</reference>
<evidence type="ECO:0000250" key="1">
    <source>
        <dbReference type="UniProtKB" id="F8V2V0"/>
    </source>
</evidence>
<evidence type="ECO:0000250" key="2">
    <source>
        <dbReference type="UniProtKB" id="P06162"/>
    </source>
</evidence>
<evidence type="ECO:0000250" key="3">
    <source>
        <dbReference type="UniProtKB" id="P16072"/>
    </source>
</evidence>
<evidence type="ECO:0000250" key="4">
    <source>
        <dbReference type="UniProtKB" id="Q77M42"/>
    </source>
</evidence>
<evidence type="ECO:0000250" key="5">
    <source>
        <dbReference type="UniProtKB" id="Q9WMB4"/>
    </source>
</evidence>
<evidence type="ECO:0000255" key="6"/>
<evidence type="ECO:0000269" key="7">
    <source>
    </source>
</evidence>
<evidence type="ECO:0000269" key="8">
    <source>
    </source>
</evidence>
<evidence type="ECO:0000269" key="9">
    <source>
    </source>
</evidence>
<evidence type="ECO:0000269" key="10">
    <source>
    </source>
</evidence>
<evidence type="ECO:0000305" key="11"/>
<evidence type="ECO:0007744" key="12">
    <source>
        <dbReference type="PDB" id="3BBZ"/>
    </source>
</evidence>
<evidence type="ECO:0007744" key="13">
    <source>
        <dbReference type="PDB" id="8IZM"/>
    </source>
</evidence>
<evidence type="ECO:0007744" key="14">
    <source>
        <dbReference type="PDB" id="8YXM"/>
    </source>
</evidence>
<evidence type="ECO:0007744" key="15">
    <source>
        <dbReference type="PDB" id="8YXO"/>
    </source>
</evidence>
<evidence type="ECO:0007744" key="16">
    <source>
        <dbReference type="PDB" id="8YXR"/>
    </source>
</evidence>
<dbReference type="EMBL" id="AF201473">
    <property type="protein sequence ID" value="AAF70389.1"/>
    <property type="molecule type" value="Genomic_RNA"/>
</dbReference>
<dbReference type="EMBL" id="AF338106">
    <property type="protein sequence ID" value="AAK83228.1"/>
    <property type="molecule type" value="Genomic_RNA"/>
</dbReference>
<dbReference type="EMBL" id="FJ211586">
    <property type="protein sequence ID" value="ACN50035.1"/>
    <property type="molecule type" value="Viral_cRNA"/>
</dbReference>
<dbReference type="EMBL" id="HQ416906">
    <property type="protein sequence ID" value="ADR82163.1"/>
    <property type="molecule type" value="Viral_cRNA"/>
</dbReference>
<dbReference type="EMBL" id="HQ416907">
    <property type="protein sequence ID" value="ADR82172.1"/>
    <property type="molecule type" value="Viral_cRNA"/>
</dbReference>
<dbReference type="EMBL" id="JQ946550">
    <property type="protein sequence ID" value="AGC97141.1"/>
    <property type="molecule type" value="Viral_cRNA"/>
</dbReference>
<dbReference type="EMBL" id="JQ946551">
    <property type="protein sequence ID" value="AGC97150.1"/>
    <property type="molecule type" value="Viral_cRNA"/>
</dbReference>
<dbReference type="EMBL" id="JQ946552">
    <property type="protein sequence ID" value="AGC97159.1"/>
    <property type="molecule type" value="Viral_cRNA"/>
</dbReference>
<dbReference type="EMBL" id="JQ946553">
    <property type="protein sequence ID" value="AGC97168.1"/>
    <property type="molecule type" value="Viral_cRNA"/>
</dbReference>
<dbReference type="EMBL" id="JQ946554">
    <property type="protein sequence ID" value="AGC97177.1"/>
    <property type="molecule type" value="Viral_cRNA"/>
</dbReference>
<dbReference type="PDB" id="3BBZ">
    <property type="method" value="X-ray"/>
    <property type="resolution" value="2.10 A"/>
    <property type="chains" value="A/B=343-391"/>
</dbReference>
<dbReference type="PDB" id="8IZL">
    <property type="method" value="EM"/>
    <property type="resolution" value="2.93 A"/>
    <property type="chains" value="B/C/D/E=1-391"/>
</dbReference>
<dbReference type="PDB" id="8IZM">
    <property type="method" value="EM"/>
    <property type="resolution" value="3.01 A"/>
    <property type="chains" value="B/C/D/E=1-391"/>
</dbReference>
<dbReference type="PDB" id="8X01">
    <property type="method" value="EM"/>
    <property type="resolution" value="3.01 A"/>
    <property type="chains" value="B/C/D/E=1-391"/>
</dbReference>
<dbReference type="PDB" id="8YXM">
    <property type="method" value="EM"/>
    <property type="resolution" value="2.93 A"/>
    <property type="chains" value="B/C=1-391"/>
</dbReference>
<dbReference type="PDB" id="8YXO">
    <property type="method" value="EM"/>
    <property type="resolution" value="3.49 A"/>
    <property type="chains" value="B/C/D/E=1-391"/>
</dbReference>
<dbReference type="PDB" id="8YXR">
    <property type="method" value="EM"/>
    <property type="resolution" value="3.63 A"/>
    <property type="chains" value="B/C/D/E=1-391"/>
</dbReference>
<dbReference type="PDBsum" id="3BBZ"/>
<dbReference type="PDBsum" id="8IZL"/>
<dbReference type="PDBsum" id="8IZM"/>
<dbReference type="PDBsum" id="8X01"/>
<dbReference type="PDBsum" id="8YXM"/>
<dbReference type="PDBsum" id="8YXO"/>
<dbReference type="PDBsum" id="8YXR"/>
<dbReference type="EMDB" id="EMD-37964"/>
<dbReference type="SMR" id="C0JJ97"/>
<dbReference type="Proteomes" id="UP000130880">
    <property type="component" value="Genome"/>
</dbReference>
<dbReference type="Proteomes" id="UP000140319">
    <property type="component" value="Genome"/>
</dbReference>
<dbReference type="Proteomes" id="UP000163835">
    <property type="component" value="Genome"/>
</dbReference>
<dbReference type="Proteomes" id="UP000180939">
    <property type="component" value="Genome"/>
</dbReference>
<dbReference type="Proteomes" id="UP000181045">
    <property type="component" value="Genome"/>
</dbReference>
<dbReference type="Proteomes" id="UP000181136">
    <property type="component" value="Genome"/>
</dbReference>
<dbReference type="Proteomes" id="UP000181151">
    <property type="component" value="Genome"/>
</dbReference>
<dbReference type="Proteomes" id="UP000181325">
    <property type="component" value="Genome"/>
</dbReference>
<dbReference type="Proteomes" id="UP000181401">
    <property type="component" value="Genome"/>
</dbReference>
<dbReference type="Proteomes" id="UP000181496">
    <property type="component" value="Genome"/>
</dbReference>
<dbReference type="CDD" id="cd21031">
    <property type="entry name" value="MEV_P-protein-C_like"/>
    <property type="match status" value="1"/>
</dbReference>
<dbReference type="Gene3D" id="1.20.5.300">
    <property type="match status" value="1"/>
</dbReference>
<dbReference type="Gene3D" id="1.10.8.10">
    <property type="entry name" value="DNA helicase RuvA subunit, C-terminal domain"/>
    <property type="match status" value="1"/>
</dbReference>
<dbReference type="InterPro" id="IPR004897">
    <property type="entry name" value="P/V_Pprotein_paramyxoviral"/>
</dbReference>
<dbReference type="Pfam" id="PF03210">
    <property type="entry name" value="Paramyx_P_V_C"/>
    <property type="match status" value="1"/>
</dbReference>
<sequence>MDQFIKQDETGDLIETGMNVANHFLSTPIQGTNSLSKASILPGVAPVLIGNPEQKNIQHPTASHQGSKTKGRGSGVRSIIVSPSEAGNGGTQIPEPLFAQTGQGGIVTTVYQDPTIQPTGSYRSVELAKIGKERMINRFVEKPRTSTPVTEFKRGGPGAAAQGQTIQEEGIDGNGASAGSKERSGSLSGATLYAHLSLPQQDSTPANVGIAPQSAISANEIMDLLRGMDARLQHLEQKVDKVLAQGSMVTQIKNELSTVKTTLATIEGMMATVKIMDPGNPTGVPVDELRRSFSDHVTIVSGPGDVSFSSSEKPTLYLDELARPVSKPRPAKQTKSQPVKDLAGQKVMITKMITDCVANPQMKQAFEQRLAKASTEDALNDIKRDIIRSAI</sequence>
<name>PHOSP_MUMPJ</name>
<protein>
    <recommendedName>
        <fullName>Phosphoprotein</fullName>
        <shortName>Protein P</shortName>
    </recommendedName>
</protein>
<feature type="chain" id="PRO_0000462027" description="Phosphoprotein">
    <location>
        <begin position="1"/>
        <end position="391"/>
    </location>
</feature>
<feature type="region of interest" description="N-terminus domain" evidence="10">
    <location>
        <begin position="1"/>
        <end position="194"/>
    </location>
</feature>
<feature type="region of interest" description="Multimerization" evidence="4">
    <location>
        <begin position="216"/>
        <end position="279"/>
    </location>
</feature>
<feature type="region of interest" description="Interaction with the nucleoprotein" evidence="7">
    <location>
        <begin position="343"/>
        <end position="391"/>
    </location>
</feature>
<feature type="coiled-coil region" evidence="6">
    <location>
        <begin position="218"/>
        <end position="245"/>
    </location>
</feature>
<feature type="modified residue" description="Phosphothreonine" evidence="1">
    <location>
        <position position="10"/>
    </location>
</feature>
<feature type="modified residue" description="Phosphothreonine" evidence="1">
    <location>
        <position position="16"/>
    </location>
</feature>
<feature type="modified residue" description="Phosphothreonine" evidence="1">
    <location>
        <position position="91"/>
    </location>
</feature>
<feature type="modified residue" description="Phosphothreonine" evidence="1">
    <location>
        <position position="150"/>
    </location>
</feature>
<feature type="modified residue" description="Phosphothreonine" evidence="1">
    <location>
        <position position="165"/>
    </location>
</feature>
<feature type="modified residue" description="Phosphoserine" evidence="1">
    <location>
        <position position="188"/>
    </location>
</feature>
<feature type="modified residue" description="Phosphothreonine" evidence="1">
    <location>
        <position position="250"/>
    </location>
</feature>
<feature type="modified residue" description="Phosphoserine" evidence="1">
    <location>
        <position position="257"/>
    </location>
</feature>
<feature type="modified residue" description="Phosphothreonine" evidence="1">
    <location>
        <position position="258"/>
    </location>
</feature>
<feature type="modified residue" description="Phosphothreonine" evidence="1">
    <location>
        <position position="282"/>
    </location>
</feature>
<feature type="modified residue" description="Phosphoserine" evidence="3">
    <location>
        <position position="292"/>
    </location>
</feature>
<feature type="modified residue" description="Phosphoserine" evidence="3">
    <location>
        <position position="294"/>
    </location>
</feature>
<feature type="modified residue" description="Phosphothreonine" evidence="3">
    <location>
        <position position="298"/>
    </location>
</feature>
<feature type="modified residue" description="Phosphoserine" evidence="3">
    <location>
        <position position="301"/>
    </location>
</feature>
<feature type="modified residue" description="Phosphoserine" evidence="1">
    <location>
        <position position="374"/>
    </location>
</feature>
<feature type="modified residue" description="Phosphothreonine" evidence="1">
    <location>
        <position position="375"/>
    </location>
</feature>
<feature type="sequence variant" description="In strain: Isolate Jeryl Lynn-CK4.">
    <original>N</original>
    <variation>T</variation>
    <location>
        <position position="56"/>
    </location>
</feature>
<gene>
    <name evidence="11" type="primary">P/V/I</name>
</gene>
<comment type="function">
    <text evidence="2 3">Essential cofactor of the RNA polymerase L that plays a central role in the transcription and replication by forming the polymerase complex with RNA polymerase L and recruiting L to the genomic N-RNA template for RNA synthesis (By similarity). Also plays a central role in the encapsidation of nascent RNA chains by forming the encapsidation complex with the nucleocapsid protein N (N-P complex). Acts as a chaperone for newly synthesized free N protein, so-called N0, allowing encapsidation of nascent RNA chains during replication (By similarity). The nucleoprotein protein N prevents excessive phosphorylation of P, which leads to down-regulation of viral transcription/ replication. Participates, together with N, in the formation of viral factories (viroplasms), which are large inclusions in the host cytoplasm where replication takes place (By similarity).</text>
</comment>
<comment type="subunit">
    <text evidence="3 4 7 10">Homotetramer (PubMed:38760379). Interacts (via multimerization domain) with polymerase L; this interaction forms the polymerase L-P complex (PubMed:38760379). Interacts (via N-terminus) with N0 (via Ncore); this interaction allows P to chaperon N0 to avoid N polymerization before encapsidation (By similarity). Interacts (via C-terminus) with N-RNA template; this interaction positions the polymerase on the template for both transcription and replication (PubMed:18468621). Interacts with host RPS6KB1 kinase; this interaction may play a role in the viral replication and transcription (By similarity).</text>
</comment>
<comment type="subcellular location">
    <subcellularLocation>
        <location evidence="9">Virion</location>
    </subcellularLocation>
</comment>
<comment type="domain">
    <text evidence="5 7">The N-terminus consists of a long intrinsically disordered tail. The central part contains the coiled-coil multimerization domain (MD or OD) (By similarity). Forms a four-stranded coiled coil structure (By similarity). The C-terminus constitutes the alpha-helical X domain (XD) that binds to the nucleocapsid (N-RNA complex) and the L polymerase (PubMed:18468621).</text>
</comment>
<comment type="RNA editing">
    <location>
        <position position="155" evidence="3"/>
    </location>
    <text evidence="8">Partially edited. RNA editing at this position consists of an insertion of 2 or 4 guanine nucleotides. The sequence displayed here is the P protein, derived from the edited RNA (+ 2 nucleotides). The unedited RNA gives rise to the V protein (AC Q8QV69). The edited RNA (+ 4 nucleotide) gives rise to the I protein (AC Q9J4L7).</text>
</comment>
<comment type="similarity">
    <text evidence="11">Belongs to the rubulavirus/avulavirus P protein family.</text>
</comment>
<organism>
    <name type="scientific">Mumps virus genotype A (strain Jeryl-Lynn)</name>
    <name type="common">MuV</name>
    <dbReference type="NCBI Taxonomy" id="11168"/>
    <lineage>
        <taxon>Viruses</taxon>
        <taxon>Riboviria</taxon>
        <taxon>Orthornavirae</taxon>
        <taxon>Negarnaviricota</taxon>
        <taxon>Haploviricotina</taxon>
        <taxon>Monjiviricetes</taxon>
        <taxon>Mononegavirales</taxon>
        <taxon>Paramyxoviridae</taxon>
        <taxon>Rubulavirinae</taxon>
        <taxon>Orthorubulavirus</taxon>
        <taxon>Orthorubulavirus parotitidis</taxon>
        <taxon>Mumps orthorubulavirus</taxon>
    </lineage>
</organism>